<sequence>MATANGAVENGQPDRKPPALPRPIRNLEVKFTKIFINNEWHESKSGKKFATCNPSTREQICEVEEGDKPDVDKAVEAAQVAFQRGSPWRRLDALSRGRLLHQLADLVERDRATLAALETMDTGKPFLHAFFIDLEGCIRTLRYFAGWADKIQGKTIPTDDNVVCFTRHEPIGVCGAITPWNFPLLMLVWKLAPALCCGNTMVLKPAEQTPLTALYLGSLIKEAGFPPGVVNIVPGFGPTVGAAISSHPQINKIAFTGSTEVGKLVKEAASRSNLKRVTLELGGKNPCIVCADADLDLAVECAHQGVFFNQGQCCTAASRVFVEEQVYSEFVRRSVEYAKKRPVGDPFDVKTEQGPQIDQKQFDKILELIESGKKEGAKLECGGSAMEDKGLFIKPTVFSEVTDNMRIAKEEIFGPVQPILKFKSIEEVIKRANSTDYGLTAAVFTKNLDKALKLASALESGTVWINCYNALYAQAPFGGFKMSGNGRELGEYALAEYTEVKTVTIKLGDKNP</sequence>
<dbReference type="EC" id="1.2.1.36" evidence="13"/>
<dbReference type="EMBL" id="U07919">
    <property type="protein sequence ID" value="AAA79036.1"/>
    <property type="molecule type" value="mRNA"/>
</dbReference>
<dbReference type="EMBL" id="BC069274">
    <property type="protein sequence ID" value="AAH69274.1"/>
    <property type="molecule type" value="mRNA"/>
</dbReference>
<dbReference type="CCDS" id="CCDS10389.1"/>
<dbReference type="PIR" id="A55684">
    <property type="entry name" value="A55684"/>
</dbReference>
<dbReference type="RefSeq" id="NP_000684.2">
    <property type="nucleotide sequence ID" value="NM_000693.4"/>
</dbReference>
<dbReference type="RefSeq" id="NP_001280744.1">
    <property type="nucleotide sequence ID" value="NM_001293815.1"/>
</dbReference>
<dbReference type="PDB" id="5FHZ">
    <property type="method" value="X-ray"/>
    <property type="resolution" value="2.90 A"/>
    <property type="chains" value="A/B/C/D/E/F/G/H=1-512"/>
</dbReference>
<dbReference type="PDB" id="6S6W">
    <property type="method" value="X-ray"/>
    <property type="resolution" value="3.25 A"/>
    <property type="chains" value="A/B=20-508"/>
</dbReference>
<dbReference type="PDB" id="6TE5">
    <property type="method" value="X-ray"/>
    <property type="resolution" value="3.25 A"/>
    <property type="chains" value="A/B=1-512"/>
</dbReference>
<dbReference type="PDB" id="6TGW">
    <property type="method" value="X-ray"/>
    <property type="resolution" value="2.80 A"/>
    <property type="chains" value="A/B/C/D=1-512"/>
</dbReference>
<dbReference type="PDB" id="6TRY">
    <property type="method" value="X-ray"/>
    <property type="resolution" value="2.90 A"/>
    <property type="chains" value="A/B=1-512"/>
</dbReference>
<dbReference type="PDB" id="7A6Q">
    <property type="method" value="X-ray"/>
    <property type="resolution" value="2.95 A"/>
    <property type="chains" value="A/B=1-512"/>
</dbReference>
<dbReference type="PDB" id="7QK7">
    <property type="method" value="X-ray"/>
    <property type="resolution" value="2.29 A"/>
    <property type="chains" value="A/B=1-512"/>
</dbReference>
<dbReference type="PDB" id="7QK8">
    <property type="method" value="X-ray"/>
    <property type="resolution" value="1.89 A"/>
    <property type="chains" value="A/B=1-512"/>
</dbReference>
<dbReference type="PDB" id="7QK9">
    <property type="method" value="X-ray"/>
    <property type="resolution" value="1.78 A"/>
    <property type="chains" value="A/B=20-508"/>
</dbReference>
<dbReference type="PDBsum" id="5FHZ"/>
<dbReference type="PDBsum" id="6S6W"/>
<dbReference type="PDBsum" id="6TE5"/>
<dbReference type="PDBsum" id="6TGW"/>
<dbReference type="PDBsum" id="6TRY"/>
<dbReference type="PDBsum" id="7A6Q"/>
<dbReference type="PDBsum" id="7QK7"/>
<dbReference type="PDBsum" id="7QK8"/>
<dbReference type="PDBsum" id="7QK9"/>
<dbReference type="SMR" id="P47895"/>
<dbReference type="BioGRID" id="106722">
    <property type="interactions" value="55"/>
</dbReference>
<dbReference type="FunCoup" id="P47895">
    <property type="interactions" value="806"/>
</dbReference>
<dbReference type="IntAct" id="P47895">
    <property type="interactions" value="42"/>
</dbReference>
<dbReference type="MINT" id="P47895"/>
<dbReference type="STRING" id="9606.ENSP00000332256"/>
<dbReference type="BindingDB" id="P47895"/>
<dbReference type="ChEMBL" id="CHEMBL3579"/>
<dbReference type="DrugBank" id="DB00157">
    <property type="generic name" value="NADH"/>
</dbReference>
<dbReference type="DrugBank" id="DB00162">
    <property type="generic name" value="Vitamin A"/>
</dbReference>
<dbReference type="SwissLipids" id="SLP:000001878"/>
<dbReference type="GlyGen" id="P47895">
    <property type="glycosylation" value="1 site"/>
</dbReference>
<dbReference type="iPTMnet" id="P47895"/>
<dbReference type="PhosphoSitePlus" id="P47895"/>
<dbReference type="SwissPalm" id="P47895"/>
<dbReference type="BioMuta" id="ALDH1A3"/>
<dbReference type="DMDM" id="52788258"/>
<dbReference type="jPOST" id="P47895"/>
<dbReference type="MassIVE" id="P47895"/>
<dbReference type="PaxDb" id="9606-ENSP00000332256"/>
<dbReference type="PeptideAtlas" id="P47895"/>
<dbReference type="ProteomicsDB" id="55815"/>
<dbReference type="Pumba" id="P47895"/>
<dbReference type="Antibodypedia" id="43944">
    <property type="antibodies" value="236 antibodies from 31 providers"/>
</dbReference>
<dbReference type="DNASU" id="220"/>
<dbReference type="Ensembl" id="ENST00000329841.10">
    <property type="protein sequence ID" value="ENSP00000332256.5"/>
    <property type="gene ID" value="ENSG00000184254.18"/>
</dbReference>
<dbReference type="GeneID" id="220"/>
<dbReference type="KEGG" id="hsa:220"/>
<dbReference type="MANE-Select" id="ENST00000329841.10">
    <property type="protein sequence ID" value="ENSP00000332256.5"/>
    <property type="RefSeq nucleotide sequence ID" value="NM_000693.4"/>
    <property type="RefSeq protein sequence ID" value="NP_000684.2"/>
</dbReference>
<dbReference type="UCSC" id="uc002bwn.5">
    <property type="organism name" value="human"/>
</dbReference>
<dbReference type="AGR" id="HGNC:409"/>
<dbReference type="CTD" id="220"/>
<dbReference type="DisGeNET" id="220"/>
<dbReference type="GeneCards" id="ALDH1A3"/>
<dbReference type="HGNC" id="HGNC:409">
    <property type="gene designation" value="ALDH1A3"/>
</dbReference>
<dbReference type="HPA" id="ENSG00000184254">
    <property type="expression patterns" value="Tissue enhanced (prostate, urinary bladder)"/>
</dbReference>
<dbReference type="MalaCards" id="ALDH1A3"/>
<dbReference type="MIM" id="600463">
    <property type="type" value="gene"/>
</dbReference>
<dbReference type="MIM" id="615113">
    <property type="type" value="phenotype"/>
</dbReference>
<dbReference type="neXtProt" id="NX_P47895"/>
<dbReference type="OpenTargets" id="ENSG00000184254"/>
<dbReference type="Orphanet" id="98938">
    <property type="disease" value="Colobomatous microphthalmia"/>
</dbReference>
<dbReference type="Orphanet" id="35612">
    <property type="disease" value="Nanophthalmos"/>
</dbReference>
<dbReference type="PharmGKB" id="PA24694"/>
<dbReference type="VEuPathDB" id="HostDB:ENSG00000184254"/>
<dbReference type="eggNOG" id="KOG2450">
    <property type="taxonomic scope" value="Eukaryota"/>
</dbReference>
<dbReference type="GeneTree" id="ENSGT00940000158815"/>
<dbReference type="HOGENOM" id="CLU_005391_0_1_1"/>
<dbReference type="InParanoid" id="P47895"/>
<dbReference type="OMA" id="GTYAINW"/>
<dbReference type="OrthoDB" id="310895at2759"/>
<dbReference type="PAN-GO" id="P47895">
    <property type="GO annotations" value="1 GO annotation based on evolutionary models"/>
</dbReference>
<dbReference type="PhylomeDB" id="P47895"/>
<dbReference type="TreeFam" id="TF300455"/>
<dbReference type="BioCyc" id="MetaCyc:HS00013-MONOMER"/>
<dbReference type="BRENDA" id="1.2.1.5">
    <property type="organism ID" value="2681"/>
</dbReference>
<dbReference type="PathwayCommons" id="P47895"/>
<dbReference type="Reactome" id="R-HSA-5365859">
    <property type="pathway name" value="RA biosynthesis pathway"/>
</dbReference>
<dbReference type="SignaLink" id="P47895"/>
<dbReference type="SIGNOR" id="P47895"/>
<dbReference type="UniPathway" id="UPA00912"/>
<dbReference type="BioGRID-ORCS" id="220">
    <property type="hits" value="7 hits in 1148 CRISPR screens"/>
</dbReference>
<dbReference type="CD-CODE" id="91857CE7">
    <property type="entry name" value="Nucleolus"/>
</dbReference>
<dbReference type="ChiTaRS" id="ALDH1A3">
    <property type="organism name" value="human"/>
</dbReference>
<dbReference type="GeneWiki" id="ALDH1A3"/>
<dbReference type="GenomeRNAi" id="220"/>
<dbReference type="Pharos" id="P47895">
    <property type="development level" value="Tchem"/>
</dbReference>
<dbReference type="PRO" id="PR:P47895"/>
<dbReference type="Proteomes" id="UP000005640">
    <property type="component" value="Chromosome 15"/>
</dbReference>
<dbReference type="RNAct" id="P47895">
    <property type="molecule type" value="protein"/>
</dbReference>
<dbReference type="Bgee" id="ENSG00000184254">
    <property type="expression patterns" value="Expressed in palpebral conjunctiva and 156 other cell types or tissues"/>
</dbReference>
<dbReference type="ExpressionAtlas" id="P47895">
    <property type="expression patterns" value="baseline and differential"/>
</dbReference>
<dbReference type="GO" id="GO:0005737">
    <property type="term" value="C:cytoplasm"/>
    <property type="evidence" value="ECO:0000314"/>
    <property type="project" value="UniProtKB"/>
</dbReference>
<dbReference type="GO" id="GO:0005829">
    <property type="term" value="C:cytosol"/>
    <property type="evidence" value="ECO:0000304"/>
    <property type="project" value="Reactome"/>
</dbReference>
<dbReference type="GO" id="GO:0070062">
    <property type="term" value="C:extracellular exosome"/>
    <property type="evidence" value="ECO:0007005"/>
    <property type="project" value="UniProtKB"/>
</dbReference>
<dbReference type="GO" id="GO:0004029">
    <property type="term" value="F:aldehyde dehydrogenase (NAD+) activity"/>
    <property type="evidence" value="ECO:0000318"/>
    <property type="project" value="GO_Central"/>
</dbReference>
<dbReference type="GO" id="GO:0004030">
    <property type="term" value="F:aldehyde dehydrogenase [NAD(P)+] activity"/>
    <property type="evidence" value="ECO:0000314"/>
    <property type="project" value="UniProtKB"/>
</dbReference>
<dbReference type="GO" id="GO:0070403">
    <property type="term" value="F:NAD+ binding"/>
    <property type="evidence" value="ECO:0007669"/>
    <property type="project" value="Ensembl"/>
</dbReference>
<dbReference type="GO" id="GO:0042803">
    <property type="term" value="F:protein homodimerization activity"/>
    <property type="evidence" value="ECO:0000314"/>
    <property type="project" value="UniProtKB"/>
</dbReference>
<dbReference type="GO" id="GO:0001758">
    <property type="term" value="F:retinal dehydrogenase activity"/>
    <property type="evidence" value="ECO:0000314"/>
    <property type="project" value="UniProtKB"/>
</dbReference>
<dbReference type="GO" id="GO:0070324">
    <property type="term" value="F:thyroid hormone binding"/>
    <property type="evidence" value="ECO:0007669"/>
    <property type="project" value="Ensembl"/>
</dbReference>
<dbReference type="GO" id="GO:0006915">
    <property type="term" value="P:apoptotic process"/>
    <property type="evidence" value="ECO:0007669"/>
    <property type="project" value="Ensembl"/>
</dbReference>
<dbReference type="GO" id="GO:0031076">
    <property type="term" value="P:embryonic camera-type eye development"/>
    <property type="evidence" value="ECO:0000250"/>
    <property type="project" value="UniProtKB"/>
</dbReference>
<dbReference type="GO" id="GO:0048048">
    <property type="term" value="P:embryonic eye morphogenesis"/>
    <property type="evidence" value="ECO:0000250"/>
    <property type="project" value="UniProtKB"/>
</dbReference>
<dbReference type="GO" id="GO:0060324">
    <property type="term" value="P:face development"/>
    <property type="evidence" value="ECO:0007669"/>
    <property type="project" value="Ensembl"/>
</dbReference>
<dbReference type="GO" id="GO:0070384">
    <property type="term" value="P:Harderian gland development"/>
    <property type="evidence" value="ECO:0007669"/>
    <property type="project" value="Ensembl"/>
</dbReference>
<dbReference type="GO" id="GO:0042472">
    <property type="term" value="P:inner ear morphogenesis"/>
    <property type="evidence" value="ECO:0007669"/>
    <property type="project" value="Ensembl"/>
</dbReference>
<dbReference type="GO" id="GO:0007626">
    <property type="term" value="P:locomotory behavior"/>
    <property type="evidence" value="ECO:0007669"/>
    <property type="project" value="Ensembl"/>
</dbReference>
<dbReference type="GO" id="GO:0050885">
    <property type="term" value="P:neuromuscular process controlling balance"/>
    <property type="evidence" value="ECO:0007669"/>
    <property type="project" value="Ensembl"/>
</dbReference>
<dbReference type="GO" id="GO:0021768">
    <property type="term" value="P:nucleus accumbens development"/>
    <property type="evidence" value="ECO:0007669"/>
    <property type="project" value="Ensembl"/>
</dbReference>
<dbReference type="GO" id="GO:0060166">
    <property type="term" value="P:olfactory pit development"/>
    <property type="evidence" value="ECO:0007669"/>
    <property type="project" value="Ensembl"/>
</dbReference>
<dbReference type="GO" id="GO:0002072">
    <property type="term" value="P:optic cup morphogenesis involved in camera-type eye development"/>
    <property type="evidence" value="ECO:0007669"/>
    <property type="project" value="Ensembl"/>
</dbReference>
<dbReference type="GO" id="GO:0043065">
    <property type="term" value="P:positive regulation of apoptotic process"/>
    <property type="evidence" value="ECO:0007669"/>
    <property type="project" value="Ensembl"/>
</dbReference>
<dbReference type="GO" id="GO:0051289">
    <property type="term" value="P:protein homotetramerization"/>
    <property type="evidence" value="ECO:0000314"/>
    <property type="project" value="UniProtKB"/>
</dbReference>
<dbReference type="GO" id="GO:0042574">
    <property type="term" value="P:retinal metabolic process"/>
    <property type="evidence" value="ECO:0000314"/>
    <property type="project" value="UniProtKB"/>
</dbReference>
<dbReference type="GO" id="GO:0002138">
    <property type="term" value="P:retinoic acid biosynthetic process"/>
    <property type="evidence" value="ECO:0000314"/>
    <property type="project" value="UniProtKB"/>
</dbReference>
<dbReference type="GO" id="GO:0042573">
    <property type="term" value="P:retinoic acid metabolic process"/>
    <property type="evidence" value="ECO:0000314"/>
    <property type="project" value="UniProtKB"/>
</dbReference>
<dbReference type="GO" id="GO:0042572">
    <property type="term" value="P:retinol metabolic process"/>
    <property type="evidence" value="ECO:0007669"/>
    <property type="project" value="UniProtKB-UniPathway"/>
</dbReference>
<dbReference type="GO" id="GO:0060013">
    <property type="term" value="P:righting reflex"/>
    <property type="evidence" value="ECO:0007669"/>
    <property type="project" value="Ensembl"/>
</dbReference>
<dbReference type="CDD" id="cd07141">
    <property type="entry name" value="ALDH_F1AB_F2_RALDH1"/>
    <property type="match status" value="1"/>
</dbReference>
<dbReference type="FunFam" id="3.40.605.10:FF:000054">
    <property type="entry name" value="Aldehyde dehydrogenase family 1 member A3"/>
    <property type="match status" value="1"/>
</dbReference>
<dbReference type="FunFam" id="3.40.605.10:FF:000026">
    <property type="entry name" value="Aldehyde dehydrogenase, putative"/>
    <property type="match status" value="1"/>
</dbReference>
<dbReference type="FunFam" id="3.40.309.10:FF:000001">
    <property type="entry name" value="Mitochondrial aldehyde dehydrogenase 2"/>
    <property type="match status" value="1"/>
</dbReference>
<dbReference type="Gene3D" id="3.40.605.10">
    <property type="entry name" value="Aldehyde Dehydrogenase, Chain A, domain 1"/>
    <property type="match status" value="1"/>
</dbReference>
<dbReference type="Gene3D" id="3.40.309.10">
    <property type="entry name" value="Aldehyde Dehydrogenase, Chain A, domain 2"/>
    <property type="match status" value="1"/>
</dbReference>
<dbReference type="InterPro" id="IPR016161">
    <property type="entry name" value="Ald_DH/histidinol_DH"/>
</dbReference>
<dbReference type="InterPro" id="IPR016163">
    <property type="entry name" value="Ald_DH_C"/>
</dbReference>
<dbReference type="InterPro" id="IPR016160">
    <property type="entry name" value="Ald_DH_CS_CYS"/>
</dbReference>
<dbReference type="InterPro" id="IPR029510">
    <property type="entry name" value="Ald_DH_CS_GLU"/>
</dbReference>
<dbReference type="InterPro" id="IPR016162">
    <property type="entry name" value="Ald_DH_N"/>
</dbReference>
<dbReference type="InterPro" id="IPR015590">
    <property type="entry name" value="Aldehyde_DH_dom"/>
</dbReference>
<dbReference type="PANTHER" id="PTHR11699">
    <property type="entry name" value="ALDEHYDE DEHYDROGENASE-RELATED"/>
    <property type="match status" value="1"/>
</dbReference>
<dbReference type="Pfam" id="PF00171">
    <property type="entry name" value="Aldedh"/>
    <property type="match status" value="1"/>
</dbReference>
<dbReference type="SUPFAM" id="SSF53720">
    <property type="entry name" value="ALDH-like"/>
    <property type="match status" value="1"/>
</dbReference>
<dbReference type="PROSITE" id="PS00070">
    <property type="entry name" value="ALDEHYDE_DEHYDR_CYS"/>
    <property type="match status" value="1"/>
</dbReference>
<dbReference type="PROSITE" id="PS00687">
    <property type="entry name" value="ALDEHYDE_DEHYDR_GLU"/>
    <property type="match status" value="1"/>
</dbReference>
<keyword id="KW-0002">3D-structure</keyword>
<keyword id="KW-0007">Acetylation</keyword>
<keyword id="KW-0963">Cytoplasm</keyword>
<keyword id="KW-0903">Direct protein sequencing</keyword>
<keyword id="KW-0225">Disease variant</keyword>
<keyword id="KW-0443">Lipid metabolism</keyword>
<keyword id="KW-1013">Microphthalmia</keyword>
<keyword id="KW-0520">NAD</keyword>
<keyword id="KW-0560">Oxidoreductase</keyword>
<keyword id="KW-1267">Proteomics identification</keyword>
<keyword id="KW-1185">Reference proteome</keyword>
<feature type="initiator methionine" description="Removed" evidence="15 21">
    <location>
        <position position="1"/>
    </location>
</feature>
<feature type="chain" id="PRO_0000056478" description="Retinaldehyde dehydrogenase 3">
    <location>
        <begin position="2"/>
        <end position="512"/>
    </location>
</feature>
<feature type="region of interest" description="Disordered" evidence="5">
    <location>
        <begin position="1"/>
        <end position="22"/>
    </location>
</feature>
<feature type="active site" description="Proton acceptor" evidence="3 4 19">
    <location>
        <position position="280"/>
    </location>
</feature>
<feature type="active site" description="Nucleophile" evidence="3 4">
    <location>
        <position position="314"/>
    </location>
</feature>
<feature type="binding site" evidence="13 20">
    <location>
        <position position="204"/>
    </location>
    <ligand>
        <name>NAD(+)</name>
        <dbReference type="ChEBI" id="CHEBI:57540"/>
    </ligand>
</feature>
<feature type="binding site" evidence="13 20">
    <location>
        <position position="207"/>
    </location>
    <ligand>
        <name>NAD(+)</name>
        <dbReference type="ChEBI" id="CHEBI:57540"/>
    </ligand>
</feature>
<feature type="binding site" evidence="13 20">
    <location>
        <begin position="257"/>
        <end position="262"/>
    </location>
    <ligand>
        <name>NAD(+)</name>
        <dbReference type="ChEBI" id="CHEBI:57540"/>
    </ligand>
</feature>
<feature type="binding site" evidence="13 20">
    <location>
        <position position="361"/>
    </location>
    <ligand>
        <name>NAD(+)</name>
        <dbReference type="ChEBI" id="CHEBI:57540"/>
    </ligand>
</feature>
<feature type="binding site" evidence="13 20">
    <location>
        <position position="411"/>
    </location>
    <ligand>
        <name>NAD(+)</name>
        <dbReference type="ChEBI" id="CHEBI:57540"/>
    </ligand>
</feature>
<feature type="site" description="Transition state stabilizer" evidence="1">
    <location>
        <position position="181"/>
    </location>
</feature>
<feature type="modified residue" description="N-acetylalanine" evidence="15 21">
    <location>
        <position position="2"/>
    </location>
</feature>
<feature type="sequence variant" id="VAR_072332" description="In MCOP8; dbSNP:rs386834230." evidence="9">
    <original>V</original>
    <variation>M</variation>
    <location>
        <position position="71"/>
    </location>
</feature>
<feature type="sequence variant" id="VAR_069322" description="In MCOP8; does not affect ALDH1A3 expression; results in strongly reduced protein levels; dbSNP:rs397514652." evidence="6">
    <original>R</original>
    <variation>C</variation>
    <location>
        <position position="89"/>
    </location>
</feature>
<feature type="sequence variant" id="VAR_069323" description="In MCOP8; dbSNP:rs754619607." evidence="8">
    <original>A</original>
    <variation>V</variation>
    <location>
        <position position="145"/>
    </location>
</feature>
<feature type="sequence variant" id="VAR_072333" description="In MCOP8." evidence="10">
    <original>C</original>
    <variation>Y</variation>
    <location>
        <position position="174"/>
    </location>
</feature>
<feature type="sequence variant" id="VAR_072334" description="In MCOP8." evidence="12">
    <original>P</original>
    <variation>R</variation>
    <location>
        <position position="355"/>
    </location>
</feature>
<feature type="sequence variant" id="VAR_069324" description="In MCOP8." evidence="8">
    <original>I</original>
    <variation>F</variation>
    <location>
        <position position="369"/>
    </location>
</feature>
<feature type="sequence variant" id="VAR_072335" description="In MCOP8; dbSNP:rs1199864354." evidence="12">
    <original>G</original>
    <variation>R</variation>
    <location>
        <position position="382"/>
    </location>
</feature>
<feature type="sequence variant" id="VAR_019706" description="In dbSNP:rs3803430.">
    <original>M</original>
    <variation>V</variation>
    <location>
        <position position="386"/>
    </location>
</feature>
<feature type="sequence variant" id="VAR_072336" description="In MCOP8." evidence="12">
    <original>E</original>
    <variation>K</variation>
    <location>
        <position position="411"/>
    </location>
</feature>
<feature type="sequence variant" id="VAR_072337" description="In MCOP8." evidence="11">
    <original>N</original>
    <variation>K</variation>
    <location>
        <position position="466"/>
    </location>
</feature>
<feature type="sequence variant" id="VAR_069325" description="In MCOP8; does not affect ALDH1A3 expression; results in strongly reduced protein levels; dbSNP:rs397514653." evidence="6">
    <original>A</original>
    <variation>P</variation>
    <location>
        <position position="493"/>
    </location>
</feature>
<feature type="sequence conflict" description="In Ref. 1; AAA79036." evidence="18" ref="1">
    <original>R</original>
    <variation>G</variation>
    <location>
        <position position="15"/>
    </location>
</feature>
<feature type="strand" evidence="27">
    <location>
        <begin position="33"/>
        <end position="36"/>
    </location>
</feature>
<feature type="strand" evidence="27">
    <location>
        <begin position="39"/>
        <end position="41"/>
    </location>
</feature>
<feature type="strand" evidence="27">
    <location>
        <begin position="48"/>
        <end position="52"/>
    </location>
</feature>
<feature type="turn" evidence="27">
    <location>
        <begin position="54"/>
        <end position="56"/>
    </location>
</feature>
<feature type="strand" evidence="27">
    <location>
        <begin position="59"/>
        <end position="64"/>
    </location>
</feature>
<feature type="helix" evidence="27">
    <location>
        <begin position="68"/>
        <end position="82"/>
    </location>
</feature>
<feature type="helix" evidence="27">
    <location>
        <begin position="87"/>
        <end position="90"/>
    </location>
</feature>
<feature type="helix" evidence="27">
    <location>
        <begin position="93"/>
        <end position="109"/>
    </location>
</feature>
<feature type="helix" evidence="27">
    <location>
        <begin position="111"/>
        <end position="122"/>
    </location>
</feature>
<feature type="helix" evidence="27">
    <location>
        <begin position="126"/>
        <end position="131"/>
    </location>
</feature>
<feature type="helix" evidence="27">
    <location>
        <begin position="133"/>
        <end position="147"/>
    </location>
</feature>
<feature type="helix" evidence="27">
    <location>
        <begin position="148"/>
        <end position="150"/>
    </location>
</feature>
<feature type="strand" evidence="24">
    <location>
        <begin position="153"/>
        <end position="156"/>
    </location>
</feature>
<feature type="strand" evidence="27">
    <location>
        <begin position="162"/>
        <end position="170"/>
    </location>
</feature>
<feature type="strand" evidence="27">
    <location>
        <begin position="172"/>
        <end position="177"/>
    </location>
</feature>
<feature type="strand" evidence="27">
    <location>
        <begin position="180"/>
        <end position="182"/>
    </location>
</feature>
<feature type="helix" evidence="27">
    <location>
        <begin position="183"/>
        <end position="196"/>
    </location>
</feature>
<feature type="strand" evidence="27">
    <location>
        <begin position="200"/>
        <end position="204"/>
    </location>
</feature>
<feature type="helix" evidence="27">
    <location>
        <begin position="211"/>
        <end position="223"/>
    </location>
</feature>
<feature type="strand" evidence="27">
    <location>
        <begin position="229"/>
        <end position="232"/>
    </location>
</feature>
<feature type="turn" evidence="27">
    <location>
        <begin position="237"/>
        <end position="239"/>
    </location>
</feature>
<feature type="helix" evidence="27">
    <location>
        <begin position="240"/>
        <end position="245"/>
    </location>
</feature>
<feature type="strand" evidence="27">
    <location>
        <begin position="252"/>
        <end position="257"/>
    </location>
</feature>
<feature type="helix" evidence="27">
    <location>
        <begin position="259"/>
        <end position="271"/>
    </location>
</feature>
<feature type="strand" evidence="27">
    <location>
        <begin position="276"/>
        <end position="280"/>
    </location>
</feature>
<feature type="strand" evidence="27">
    <location>
        <begin position="285"/>
        <end position="289"/>
    </location>
</feature>
<feature type="strand" evidence="23">
    <location>
        <begin position="291"/>
        <end position="293"/>
    </location>
</feature>
<feature type="helix" evidence="27">
    <location>
        <begin position="295"/>
        <end position="307"/>
    </location>
</feature>
<feature type="helix" evidence="27">
    <location>
        <begin position="308"/>
        <end position="311"/>
    </location>
</feature>
<feature type="strand" evidence="27">
    <location>
        <begin position="317"/>
        <end position="323"/>
    </location>
</feature>
<feature type="helix" evidence="27">
    <location>
        <begin position="324"/>
        <end position="340"/>
    </location>
</feature>
<feature type="strand" evidence="22">
    <location>
        <begin position="346"/>
        <end position="348"/>
    </location>
</feature>
<feature type="helix" evidence="27">
    <location>
        <begin position="359"/>
        <end position="375"/>
    </location>
</feature>
<feature type="strand" evidence="27">
    <location>
        <begin position="378"/>
        <end position="381"/>
    </location>
</feature>
<feature type="strand" evidence="27">
    <location>
        <begin position="384"/>
        <end position="391"/>
    </location>
</feature>
<feature type="strand" evidence="27">
    <location>
        <begin position="396"/>
        <end position="401"/>
    </location>
</feature>
<feature type="strand" evidence="25">
    <location>
        <begin position="403"/>
        <end position="405"/>
    </location>
</feature>
<feature type="helix" evidence="27">
    <location>
        <begin position="406"/>
        <end position="409"/>
    </location>
</feature>
<feature type="strand" evidence="27">
    <location>
        <begin position="414"/>
        <end position="422"/>
    </location>
</feature>
<feature type="helix" evidence="27">
    <location>
        <begin position="425"/>
        <end position="432"/>
    </location>
</feature>
<feature type="strand" evidence="26">
    <location>
        <begin position="434"/>
        <end position="436"/>
    </location>
</feature>
<feature type="strand" evidence="27">
    <location>
        <begin position="439"/>
        <end position="444"/>
    </location>
</feature>
<feature type="helix" evidence="27">
    <location>
        <begin position="448"/>
        <end position="457"/>
    </location>
</feature>
<feature type="strand" evidence="27">
    <location>
        <begin position="461"/>
        <end position="466"/>
    </location>
</feature>
<feature type="helix" evidence="27">
    <location>
        <begin position="481"/>
        <end position="483"/>
    </location>
</feature>
<feature type="strand" evidence="27">
    <location>
        <begin position="484"/>
        <end position="486"/>
    </location>
</feature>
<feature type="strand" evidence="26">
    <location>
        <begin position="488"/>
        <end position="490"/>
    </location>
</feature>
<feature type="helix" evidence="27">
    <location>
        <begin position="492"/>
        <end position="496"/>
    </location>
</feature>
<feature type="strand" evidence="27">
    <location>
        <begin position="497"/>
        <end position="506"/>
    </location>
</feature>
<reference key="1">
    <citation type="journal article" date="1994" name="Genomics">
        <title>Molecular cloning, genomic organization, and chromosomal localization of an additional human aldehyde dehydrogenase gene, ALDH6.</title>
        <authorList>
            <person name="Hsu L.C."/>
            <person name="Chang W.-C."/>
            <person name="Hiraoka L."/>
            <person name="Hsieh C.-L."/>
        </authorList>
    </citation>
    <scope>NUCLEOTIDE SEQUENCE [MRNA]</scope>
    <scope>TISSUE SPECIFICITY</scope>
    <source>
        <tissue>Salivary gland</tissue>
    </source>
</reference>
<reference key="2">
    <citation type="journal article" date="2004" name="Genome Res.">
        <title>The status, quality, and expansion of the NIH full-length cDNA project: the Mammalian Gene Collection (MGC).</title>
        <authorList>
            <consortium name="The MGC Project Team"/>
        </authorList>
    </citation>
    <scope>NUCLEOTIDE SEQUENCE [LARGE SCALE MRNA]</scope>
    <source>
        <tissue>Pancreas</tissue>
    </source>
</reference>
<reference key="3">
    <citation type="submission" date="2009-03" db="UniProtKB">
        <authorList>
            <person name="Bienvenut W.V."/>
            <person name="Dozynkiewicz M."/>
            <person name="Norman J.C."/>
        </authorList>
    </citation>
    <scope>PROTEIN SEQUENCE OF 2-15; 253-263; 407-421; 432-446 AND 488-501</scope>
    <scope>CLEAVAGE OF INITIATOR METHIONINE</scope>
    <scope>ACETYLATION AT ALA-2</scope>
    <scope>IDENTIFICATION BY MASS SPECTROMETRY</scope>
    <source>
        <tissue>Ovarian carcinoma</tissue>
    </source>
</reference>
<reference key="4">
    <citation type="journal article" date="2011" name="BMC Syst. Biol.">
        <title>Initial characterization of the human central proteome.</title>
        <authorList>
            <person name="Burkard T.R."/>
            <person name="Planyavsky M."/>
            <person name="Kaupe I."/>
            <person name="Breitwieser F.P."/>
            <person name="Buerckstuemmer T."/>
            <person name="Bennett K.L."/>
            <person name="Superti-Furga G."/>
            <person name="Colinge J."/>
        </authorList>
    </citation>
    <scope>IDENTIFICATION BY MASS SPECTROMETRY [LARGE SCALE ANALYSIS]</scope>
</reference>
<reference key="5">
    <citation type="journal article" date="2012" name="Proc. Natl. Acad. Sci. U.S.A.">
        <title>N-terminal acetylome analyses and functional insights of the N-terminal acetyltransferase NatB.</title>
        <authorList>
            <person name="Van Damme P."/>
            <person name="Lasa M."/>
            <person name="Polevoda B."/>
            <person name="Gazquez C."/>
            <person name="Elosegui-Artola A."/>
            <person name="Kim D.S."/>
            <person name="De Juan-Pardo E."/>
            <person name="Demeyer K."/>
            <person name="Hole K."/>
            <person name="Larrea E."/>
            <person name="Timmerman E."/>
            <person name="Prieto J."/>
            <person name="Arnesen T."/>
            <person name="Sherman F."/>
            <person name="Gevaert K."/>
            <person name="Aldabe R."/>
        </authorList>
    </citation>
    <scope>ACETYLATION [LARGE SCALE ANALYSIS] AT ALA-2</scope>
    <scope>CLEAVAGE OF INITIATOR METHIONINE [LARGE SCALE ANALYSIS]</scope>
    <scope>IDENTIFICATION BY MASS SPECTROMETRY [LARGE SCALE ANALYSIS]</scope>
</reference>
<reference key="6">
    <citation type="journal article" date="2013" name="Hum. Mol. Genet.">
        <title>ALDH1A3 loss of function causes bilateral anophthalmia/microphthalmia and hypoplasia of the optic nerve and optic chiasm.</title>
        <authorList>
            <person name="Yahyavi M."/>
            <person name="Abouzeid H."/>
            <person name="Gawdat G."/>
            <person name="de Preux A.S."/>
            <person name="Xiao T."/>
            <person name="Bardakjian T."/>
            <person name="Schneider A."/>
            <person name="Choi A."/>
            <person name="Jorgenson E."/>
            <person name="Baier H."/>
            <person name="El Sada M."/>
            <person name="Schorderet D.F."/>
            <person name="Slavotinek A.M."/>
        </authorList>
    </citation>
    <scope>INVOLVEMENT IN MCOP8</scope>
</reference>
<reference key="7">
    <citation type="journal article" date="2016" name="Sci. Rep.">
        <title>Crystal structure of human aldehyde dehydrogenase 1A3 complexed with NAD(+) and retinoic acid.</title>
        <authorList>
            <person name="Moretti A."/>
            <person name="Li J."/>
            <person name="Donini S."/>
            <person name="Sobol R.W."/>
            <person name="Rizzi M."/>
            <person name="Garavaglia S."/>
        </authorList>
    </citation>
    <scope>X-RAY CRYSTALLOGRAPHY (2.90 ANGSTROMS) IN COMPLEX WITH NAD AND ALL-TRANS RETINOIC ACID</scope>
    <scope>SUBUNIT</scope>
    <scope>CATALYTIC ACTIVITY</scope>
    <scope>ACTIVE SITE</scope>
    <scope>BIOPHYSICOCHEMICAL PROPERTIES</scope>
</reference>
<reference key="8">
    <citation type="journal article" date="2013" name="Am. J. Hum. Genet.">
        <title>ALDH1A3 mutations cause recessive anophthalmia and microphthalmia.</title>
        <authorList>
            <person name="Fares-Taie L."/>
            <person name="Gerber S."/>
            <person name="Chassaing N."/>
            <person name="Clayton-Smith J."/>
            <person name="Hanein S."/>
            <person name="Silva E."/>
            <person name="Serey M."/>
            <person name="Serre V."/>
            <person name="Gerard X."/>
            <person name="Baumann C."/>
            <person name="Plessis G."/>
            <person name="Demeer B."/>
            <person name="Bretillon L."/>
            <person name="Bole C."/>
            <person name="Nitschke P."/>
            <person name="Munnich A."/>
            <person name="Lyonnet S."/>
            <person name="Calvas P."/>
            <person name="Kaplan J."/>
            <person name="Ragge N."/>
            <person name="Rozet J.M."/>
        </authorList>
    </citation>
    <scope>VARIANTS MCOP8 CYS-89 AND PRO-493</scope>
    <scope>CHARACTERIZATION OF VARIANTS MCOP8 CYS-89 AND PRO-493</scope>
</reference>
<reference key="9">
    <citation type="journal article" date="2013" name="Clin. Genet.">
        <title>Mutations in ALDH1A3 cause Microphthalmia.</title>
        <authorList>
            <person name="Aldahmesh M.A."/>
            <person name="Khan A.O."/>
            <person name="Hijazi H."/>
            <person name="Alkuraya F.S."/>
        </authorList>
    </citation>
    <scope>VARIANTS MCOP8 VAL-145 AND PHE-369</scope>
</reference>
<reference key="10">
    <citation type="journal article" date="2014" name="Br. J. Ophthalmol.">
        <title>Novel splice-site and missense mutations in the ALDH1A3 gene underlying autosomal recessive anophthalmia/microphthalmia.</title>
        <authorList>
            <person name="Semerci C.N."/>
            <person name="Kalay E."/>
            <person name="Yildirim C."/>
            <person name="Dincer T."/>
            <person name="Olmez A."/>
            <person name="Toraman B."/>
            <person name="Kocyigit A."/>
            <person name="Bulgu Y."/>
            <person name="Okur V."/>
            <person name="Satiroglu-Tufan L."/>
            <person name="Akarsu N.A."/>
        </authorList>
    </citation>
    <scope>VARIANT MCOP8 LYS-466</scope>
</reference>
<reference key="11">
    <citation type="journal article" date="2014" name="Clin. Genet.">
        <title>A homozygous mutation in a consanguineous family consolidates the role of ALDH1A3 in autosomal recessive microphthalmia.</title>
        <authorList>
            <person name="Roos L."/>
            <person name="Fang M."/>
            <person name="Dali C."/>
            <person name="Jensen H."/>
            <person name="Christoffersen N."/>
            <person name="Wu B."/>
            <person name="Zhang J."/>
            <person name="Xu R."/>
            <person name="Harris P."/>
            <person name="Xu X."/>
            <person name="Groenskov K."/>
            <person name="Tuemer Z."/>
        </authorList>
    </citation>
    <scope>VARIANT MCOP8 TYR-174</scope>
</reference>
<reference key="12">
    <citation type="journal article" date="2014" name="Eur. J. Hum. Genet.">
        <title>A missense mutation in ALDH1A3 causes isolated microphthalmia/anophthalmia in nine individuals from an inbred Muslim kindred.</title>
        <authorList>
            <person name="Mory A."/>
            <person name="Ruiz F.X."/>
            <person name="Dagan E."/>
            <person name="Yakovtseva E.A."/>
            <person name="Kurolap A."/>
            <person name="Pares X."/>
            <person name="Farres J."/>
            <person name="Gershoni-Baruch R."/>
        </authorList>
    </citation>
    <scope>VARIANT MCOP8 MET-71</scope>
</reference>
<reference key="13">
    <citation type="journal article" date="2014" name="Hum. Mutat.">
        <title>Mutations in ALDH1A3 represent a frequent cause of microphthalmia/anophthalmia in consanguineous families.</title>
        <authorList>
            <person name="Abouzeid H."/>
            <person name="Favez T."/>
            <person name="Schmid A."/>
            <person name="Agosti C."/>
            <person name="Youssef M."/>
            <person name="Marzouk I."/>
            <person name="El Shakankiry N."/>
            <person name="Bayoumi N."/>
            <person name="Munier F.L."/>
            <person name="Schorderet D.F."/>
        </authorList>
    </citation>
    <scope>VARIANTS MCOP8 ARG-355; ARG-382 AND LYS-411</scope>
</reference>
<organism>
    <name type="scientific">Homo sapiens</name>
    <name type="common">Human</name>
    <dbReference type="NCBI Taxonomy" id="9606"/>
    <lineage>
        <taxon>Eukaryota</taxon>
        <taxon>Metazoa</taxon>
        <taxon>Chordata</taxon>
        <taxon>Craniata</taxon>
        <taxon>Vertebrata</taxon>
        <taxon>Euteleostomi</taxon>
        <taxon>Mammalia</taxon>
        <taxon>Eutheria</taxon>
        <taxon>Euarchontoglires</taxon>
        <taxon>Primates</taxon>
        <taxon>Haplorrhini</taxon>
        <taxon>Catarrhini</taxon>
        <taxon>Hominidae</taxon>
        <taxon>Homo</taxon>
    </lineage>
</organism>
<evidence type="ECO:0000250" key="1"/>
<evidence type="ECO:0000250" key="2">
    <source>
        <dbReference type="UniProtKB" id="Q9JHW9"/>
    </source>
</evidence>
<evidence type="ECO:0000255" key="3">
    <source>
        <dbReference type="PROSITE-ProRule" id="PRU10007"/>
    </source>
</evidence>
<evidence type="ECO:0000255" key="4">
    <source>
        <dbReference type="PROSITE-ProRule" id="PRU10008"/>
    </source>
</evidence>
<evidence type="ECO:0000256" key="5">
    <source>
        <dbReference type="SAM" id="MobiDB-lite"/>
    </source>
</evidence>
<evidence type="ECO:0000269" key="6">
    <source>
    </source>
</evidence>
<evidence type="ECO:0000269" key="7">
    <source>
    </source>
</evidence>
<evidence type="ECO:0000269" key="8">
    <source>
    </source>
</evidence>
<evidence type="ECO:0000269" key="9">
    <source>
    </source>
</evidence>
<evidence type="ECO:0000269" key="10">
    <source>
    </source>
</evidence>
<evidence type="ECO:0000269" key="11">
    <source>
    </source>
</evidence>
<evidence type="ECO:0000269" key="12">
    <source>
    </source>
</evidence>
<evidence type="ECO:0000269" key="13">
    <source>
    </source>
</evidence>
<evidence type="ECO:0000269" key="14">
    <source>
    </source>
</evidence>
<evidence type="ECO:0000269" key="15">
    <source ref="3"/>
</evidence>
<evidence type="ECO:0000303" key="16">
    <source>
    </source>
</evidence>
<evidence type="ECO:0000303" key="17">
    <source>
    </source>
</evidence>
<evidence type="ECO:0000305" key="18"/>
<evidence type="ECO:0000305" key="19">
    <source>
    </source>
</evidence>
<evidence type="ECO:0007744" key="20">
    <source>
        <dbReference type="PDB" id="5FHZ"/>
    </source>
</evidence>
<evidence type="ECO:0007744" key="21">
    <source>
    </source>
</evidence>
<evidence type="ECO:0007829" key="22">
    <source>
        <dbReference type="PDB" id="5FHZ"/>
    </source>
</evidence>
<evidence type="ECO:0007829" key="23">
    <source>
        <dbReference type="PDB" id="6TE5"/>
    </source>
</evidence>
<evidence type="ECO:0007829" key="24">
    <source>
        <dbReference type="PDB" id="6TGW"/>
    </source>
</evidence>
<evidence type="ECO:0007829" key="25">
    <source>
        <dbReference type="PDB" id="6TRY"/>
    </source>
</evidence>
<evidence type="ECO:0007829" key="26">
    <source>
        <dbReference type="PDB" id="7QK7"/>
    </source>
</evidence>
<evidence type="ECO:0007829" key="27">
    <source>
        <dbReference type="PDB" id="7QK9"/>
    </source>
</evidence>
<gene>
    <name type="primary">ALDH1A3</name>
    <name evidence="17" type="synonym">ALDH6</name>
</gene>
<accession>P47895</accession>
<accession>Q6NT64</accession>
<comment type="function">
    <text evidence="2 13">Catalyzes the NAD-dependent oxidation of aldehyde substrates, such as all-trans-retinal and all-trans-13,14-dihydroretinal, to their corresponding carboxylic acids, all-trans-retinoate and all-trans-13,14-dihydroretinoate, respectively (By similarity) (PubMed:27759097). High specificity for all-trans-retinal as substrate, can also accept acetaldehyde as substrate in vitro but with lower affinity (PubMed:27759097). Required for the biosynthesis of normal levels of retinoate in the embryonic ocular and nasal regions; a critical lipid in the embryonic development of the eye and the nasal region (By similarity).</text>
</comment>
<comment type="catalytic activity">
    <reaction evidence="13">
        <text>all-trans-retinal + NAD(+) + H2O = all-trans-retinoate + NADH + 2 H(+)</text>
        <dbReference type="Rhea" id="RHEA:42080"/>
        <dbReference type="ChEBI" id="CHEBI:15377"/>
        <dbReference type="ChEBI" id="CHEBI:15378"/>
        <dbReference type="ChEBI" id="CHEBI:17898"/>
        <dbReference type="ChEBI" id="CHEBI:35291"/>
        <dbReference type="ChEBI" id="CHEBI:57540"/>
        <dbReference type="ChEBI" id="CHEBI:57945"/>
        <dbReference type="EC" id="1.2.1.36"/>
    </reaction>
    <physiologicalReaction direction="left-to-right" evidence="13">
        <dbReference type="Rhea" id="RHEA:42081"/>
    </physiologicalReaction>
</comment>
<comment type="catalytic activity">
    <reaction evidence="13">
        <text>retinal + NAD(+) + H2O = retinoate + NADH + 2 H(+)</text>
        <dbReference type="Rhea" id="RHEA:16177"/>
        <dbReference type="ChEBI" id="CHEBI:15035"/>
        <dbReference type="ChEBI" id="CHEBI:15036"/>
        <dbReference type="ChEBI" id="CHEBI:15377"/>
        <dbReference type="ChEBI" id="CHEBI:15378"/>
        <dbReference type="ChEBI" id="CHEBI:57540"/>
        <dbReference type="ChEBI" id="CHEBI:57945"/>
        <dbReference type="EC" id="1.2.1.36"/>
    </reaction>
    <physiologicalReaction direction="left-to-right" evidence="13">
        <dbReference type="Rhea" id="RHEA:16178"/>
    </physiologicalReaction>
</comment>
<comment type="catalytic activity">
    <reaction evidence="2">
        <text>all-trans-13,14-dihydroretinal + NAD(+) + H2O = all-trans-13,14-dihydroretinoate + NADH + 2 H(+)</text>
        <dbReference type="Rhea" id="RHEA:75119"/>
        <dbReference type="ChEBI" id="CHEBI:15377"/>
        <dbReference type="ChEBI" id="CHEBI:15378"/>
        <dbReference type="ChEBI" id="CHEBI:57540"/>
        <dbReference type="ChEBI" id="CHEBI:57945"/>
        <dbReference type="ChEBI" id="CHEBI:194182"/>
        <dbReference type="ChEBI" id="CHEBI:194183"/>
    </reaction>
    <physiologicalReaction direction="left-to-right" evidence="2">
        <dbReference type="Rhea" id="RHEA:75120"/>
    </physiologicalReaction>
</comment>
<comment type="biophysicochemical properties">
    <kinetics>
        <KM evidence="13">9.3 uM for all-trans retinal</KM>
        <KM evidence="13">4.8 uM for NAD</KM>
        <KM evidence="13">2.4 mM for acetaldehyde</KM>
    </kinetics>
</comment>
<comment type="pathway">
    <text evidence="13">Cofactor metabolism; retinol metabolism.</text>
</comment>
<comment type="subunit">
    <text evidence="13">Homotetramer.</text>
</comment>
<comment type="subcellular location">
    <subcellularLocation>
        <location evidence="2">Cytoplasm</location>
    </subcellularLocation>
</comment>
<comment type="tissue specificity">
    <text evidence="14">Expressed at low levels in many tissues and at higher levels in salivary gland, stomach, and kidney.</text>
</comment>
<comment type="disease" evidence="6 7 8 9 10 11 12">
    <disease id="DI-03703">
        <name>Microphthalmia, isolated, 8</name>
        <acronym>MCOP8</acronym>
        <description>A disorder of eye formation, ranging from small size of a single eye to complete bilateral absence of ocular tissues. Ocular abnormalities like opacities of the cornea and lens, scaring of the retina and choroid, and other abnormalities may also be present.</description>
        <dbReference type="MIM" id="615113"/>
    </disease>
    <text>The disease is caused by variants affecting the gene represented in this entry.</text>
</comment>
<comment type="similarity">
    <text evidence="18">Belongs to the aldehyde dehydrogenase family.</text>
</comment>
<protein>
    <recommendedName>
        <fullName>Retinaldehyde dehydrogenase 3</fullName>
        <shortName>RALDH-3</shortName>
        <shortName>RalDH3</shortName>
        <ecNumber evidence="13">1.2.1.36</ecNumber>
    </recommendedName>
    <alternativeName>
        <fullName>Aldehyde dehydrogenase 6</fullName>
    </alternativeName>
    <alternativeName>
        <fullName evidence="16">Aldehyde dehydrogenase family 1 member A3</fullName>
        <shortName evidence="16">ALDH1A3</shortName>
    </alternativeName>
</protein>
<name>AL1A3_HUMAN</name>
<proteinExistence type="evidence at protein level"/>